<keyword id="KW-0067">ATP-binding</keyword>
<keyword id="KW-0963">Cytoplasm</keyword>
<keyword id="KW-0418">Kinase</keyword>
<keyword id="KW-0460">Magnesium</keyword>
<keyword id="KW-0479">Metal-binding</keyword>
<keyword id="KW-0547">Nucleotide-binding</keyword>
<keyword id="KW-0808">Transferase</keyword>
<proteinExistence type="inferred from homology"/>
<organism>
    <name type="scientific">Aster yellows witches'-broom phytoplasma (strain AYWB)</name>
    <dbReference type="NCBI Taxonomy" id="322098"/>
    <lineage>
        <taxon>Bacteria</taxon>
        <taxon>Bacillati</taxon>
        <taxon>Mycoplasmatota</taxon>
        <taxon>Mollicutes</taxon>
        <taxon>Acholeplasmatales</taxon>
        <taxon>Acholeplasmataceae</taxon>
        <taxon>Candidatus Phytoplasma</taxon>
        <taxon>16SrI (Aster yellows group)</taxon>
    </lineage>
</organism>
<comment type="function">
    <text evidence="1">Catalyzes the formation of acetyl phosphate from acetate and ATP. Can also catalyze the reverse reaction.</text>
</comment>
<comment type="catalytic activity">
    <reaction evidence="1">
        <text>acetate + ATP = acetyl phosphate + ADP</text>
        <dbReference type="Rhea" id="RHEA:11352"/>
        <dbReference type="ChEBI" id="CHEBI:22191"/>
        <dbReference type="ChEBI" id="CHEBI:30089"/>
        <dbReference type="ChEBI" id="CHEBI:30616"/>
        <dbReference type="ChEBI" id="CHEBI:456216"/>
        <dbReference type="EC" id="2.7.2.1"/>
    </reaction>
</comment>
<comment type="cofactor">
    <cofactor evidence="1">
        <name>Mg(2+)</name>
        <dbReference type="ChEBI" id="CHEBI:18420"/>
    </cofactor>
    <cofactor evidence="1">
        <name>Mn(2+)</name>
        <dbReference type="ChEBI" id="CHEBI:29035"/>
    </cofactor>
    <text evidence="1">Mg(2+). Can also accept Mn(2+).</text>
</comment>
<comment type="pathway">
    <text evidence="1">Metabolic intermediate biosynthesis; acetyl-CoA biosynthesis; acetyl-CoA from acetate: step 1/2.</text>
</comment>
<comment type="subunit">
    <text evidence="1">Homodimer.</text>
</comment>
<comment type="subcellular location">
    <subcellularLocation>
        <location evidence="1">Cytoplasm</location>
    </subcellularLocation>
</comment>
<comment type="similarity">
    <text evidence="1">Belongs to the acetokinase family.</text>
</comment>
<dbReference type="EC" id="2.7.2.1" evidence="1"/>
<dbReference type="EMBL" id="CP000061">
    <property type="protein sequence ID" value="ABC65677.1"/>
    <property type="molecule type" value="Genomic_DNA"/>
</dbReference>
<dbReference type="RefSeq" id="WP_011412839.1">
    <property type="nucleotide sequence ID" value="NC_007716.1"/>
</dbReference>
<dbReference type="SMR" id="Q2NIR6"/>
<dbReference type="STRING" id="322098.AYWB_560"/>
<dbReference type="KEGG" id="ayw:AYWB_560"/>
<dbReference type="eggNOG" id="COG0282">
    <property type="taxonomic scope" value="Bacteria"/>
</dbReference>
<dbReference type="HOGENOM" id="CLU_020352_0_1_14"/>
<dbReference type="OrthoDB" id="9802453at2"/>
<dbReference type="PhylomeDB" id="Q2NIR6"/>
<dbReference type="UniPathway" id="UPA00340">
    <property type="reaction ID" value="UER00458"/>
</dbReference>
<dbReference type="Proteomes" id="UP000001934">
    <property type="component" value="Chromosome"/>
</dbReference>
<dbReference type="GO" id="GO:0005737">
    <property type="term" value="C:cytoplasm"/>
    <property type="evidence" value="ECO:0007669"/>
    <property type="project" value="UniProtKB-SubCell"/>
</dbReference>
<dbReference type="GO" id="GO:0008776">
    <property type="term" value="F:acetate kinase activity"/>
    <property type="evidence" value="ECO:0007669"/>
    <property type="project" value="UniProtKB-UniRule"/>
</dbReference>
<dbReference type="GO" id="GO:0005524">
    <property type="term" value="F:ATP binding"/>
    <property type="evidence" value="ECO:0007669"/>
    <property type="project" value="UniProtKB-KW"/>
</dbReference>
<dbReference type="GO" id="GO:0000287">
    <property type="term" value="F:magnesium ion binding"/>
    <property type="evidence" value="ECO:0007669"/>
    <property type="project" value="UniProtKB-UniRule"/>
</dbReference>
<dbReference type="GO" id="GO:0006083">
    <property type="term" value="P:acetate metabolic process"/>
    <property type="evidence" value="ECO:0007669"/>
    <property type="project" value="TreeGrafter"/>
</dbReference>
<dbReference type="GO" id="GO:0006085">
    <property type="term" value="P:acetyl-CoA biosynthetic process"/>
    <property type="evidence" value="ECO:0007669"/>
    <property type="project" value="UniProtKB-UniRule"/>
</dbReference>
<dbReference type="CDD" id="cd24010">
    <property type="entry name" value="ASKHA_NBD_AcK_PK"/>
    <property type="match status" value="1"/>
</dbReference>
<dbReference type="Gene3D" id="3.30.420.40">
    <property type="match status" value="2"/>
</dbReference>
<dbReference type="HAMAP" id="MF_00020">
    <property type="entry name" value="Acetate_kinase"/>
    <property type="match status" value="1"/>
</dbReference>
<dbReference type="InterPro" id="IPR004372">
    <property type="entry name" value="Ac/propionate_kinase"/>
</dbReference>
<dbReference type="InterPro" id="IPR000890">
    <property type="entry name" value="Aliphatic_acid_kin_short-chain"/>
</dbReference>
<dbReference type="InterPro" id="IPR023865">
    <property type="entry name" value="Aliphatic_acid_kinase_CS"/>
</dbReference>
<dbReference type="InterPro" id="IPR043129">
    <property type="entry name" value="ATPase_NBD"/>
</dbReference>
<dbReference type="NCBIfam" id="TIGR00016">
    <property type="entry name" value="ackA"/>
    <property type="match status" value="1"/>
</dbReference>
<dbReference type="PANTHER" id="PTHR21060">
    <property type="entry name" value="ACETATE KINASE"/>
    <property type="match status" value="1"/>
</dbReference>
<dbReference type="PANTHER" id="PTHR21060:SF15">
    <property type="entry name" value="ACETATE KINASE-RELATED"/>
    <property type="match status" value="1"/>
</dbReference>
<dbReference type="Pfam" id="PF00871">
    <property type="entry name" value="Acetate_kinase"/>
    <property type="match status" value="1"/>
</dbReference>
<dbReference type="PIRSF" id="PIRSF000722">
    <property type="entry name" value="Acetate_prop_kin"/>
    <property type="match status" value="1"/>
</dbReference>
<dbReference type="PRINTS" id="PR00471">
    <property type="entry name" value="ACETATEKNASE"/>
</dbReference>
<dbReference type="SUPFAM" id="SSF53067">
    <property type="entry name" value="Actin-like ATPase domain"/>
    <property type="match status" value="2"/>
</dbReference>
<dbReference type="PROSITE" id="PS01075">
    <property type="entry name" value="ACETATE_KINASE_1"/>
    <property type="match status" value="1"/>
</dbReference>
<dbReference type="PROSITE" id="PS01076">
    <property type="entry name" value="ACETATE_KINASE_2"/>
    <property type="match status" value="1"/>
</dbReference>
<name>ACKA_AYWBP</name>
<sequence length="410" mass="45428">MKIMSVNSGSSSLKFQLLEMPQQEVIVSVLFERIGSNQAVLTMKTKDKKDKQVLEVPNHQTAVELLLDALIQKKVINALEEIEGVGHRVVQGGEIFSDSAVLTEKTLAQIESLCDLAPLHNPANIISIKAFQKVLPQTFQVAVFDTTFHQSMPAVNFLYATPYYWYQKYQIRKYGAHGTSYKYVTEQMQQILAKDNAKIIICHAGNGVSLCAVDSGKSVDTSMGFTPLEGVPMGTRSGNIDPAVVKFISEKENKTVACVIDDLNKKSGYLGVSGISNDTRDILASIKEGNQQAILSHDIQVKRIVDYIASYYVLLKGIDALVFTAGIGENSSFFRSEIIKRLSVLGIKLDEEKNKVKGKQELITTPDSTIKAFVIPTNEELAIAQDVLRLKQNKTNQYKDDQQECFCFCG</sequence>
<gene>
    <name evidence="1" type="primary">ackA</name>
    <name type="ordered locus">AYWB_560</name>
</gene>
<reference key="1">
    <citation type="journal article" date="2006" name="J. Bacteriol.">
        <title>Living with genome instability: the adaptation of phytoplasmas to diverse environments of their insect and plant hosts.</title>
        <authorList>
            <person name="Bai X."/>
            <person name="Zhang J."/>
            <person name="Ewing A."/>
            <person name="Miller S.A."/>
            <person name="Jancso Radek A."/>
            <person name="Shevchenko D.V."/>
            <person name="Tsukerman K."/>
            <person name="Walunas T."/>
            <person name="Lapidus A."/>
            <person name="Campbell J.W."/>
            <person name="Hogenhout S.A."/>
        </authorList>
    </citation>
    <scope>NUCLEOTIDE SEQUENCE [LARGE SCALE GENOMIC DNA]</scope>
    <source>
        <strain>AYWB</strain>
    </source>
</reference>
<protein>
    <recommendedName>
        <fullName evidence="1">Acetate kinase</fullName>
        <ecNumber evidence="1">2.7.2.1</ecNumber>
    </recommendedName>
    <alternativeName>
        <fullName evidence="1">Acetokinase</fullName>
    </alternativeName>
</protein>
<evidence type="ECO:0000255" key="1">
    <source>
        <dbReference type="HAMAP-Rule" id="MF_00020"/>
    </source>
</evidence>
<feature type="chain" id="PRO_1000002207" description="Acetate kinase">
    <location>
        <begin position="1"/>
        <end position="410"/>
    </location>
</feature>
<feature type="active site" description="Proton donor/acceptor" evidence="1">
    <location>
        <position position="145"/>
    </location>
</feature>
<feature type="binding site" evidence="1">
    <location>
        <position position="7"/>
    </location>
    <ligand>
        <name>Mg(2+)</name>
        <dbReference type="ChEBI" id="CHEBI:18420"/>
    </ligand>
</feature>
<feature type="binding site" evidence="1">
    <location>
        <position position="14"/>
    </location>
    <ligand>
        <name>ATP</name>
        <dbReference type="ChEBI" id="CHEBI:30616"/>
    </ligand>
</feature>
<feature type="binding site" evidence="1">
    <location>
        <position position="88"/>
    </location>
    <ligand>
        <name>substrate</name>
    </ligand>
</feature>
<feature type="binding site" evidence="1">
    <location>
        <begin position="203"/>
        <end position="207"/>
    </location>
    <ligand>
        <name>ATP</name>
        <dbReference type="ChEBI" id="CHEBI:30616"/>
    </ligand>
</feature>
<feature type="binding site" evidence="1">
    <location>
        <begin position="278"/>
        <end position="280"/>
    </location>
    <ligand>
        <name>ATP</name>
        <dbReference type="ChEBI" id="CHEBI:30616"/>
    </ligand>
</feature>
<feature type="binding site" evidence="1">
    <location>
        <begin position="326"/>
        <end position="330"/>
    </location>
    <ligand>
        <name>ATP</name>
        <dbReference type="ChEBI" id="CHEBI:30616"/>
    </ligand>
</feature>
<feature type="binding site" evidence="1">
    <location>
        <position position="379"/>
    </location>
    <ligand>
        <name>Mg(2+)</name>
        <dbReference type="ChEBI" id="CHEBI:18420"/>
    </ligand>
</feature>
<feature type="site" description="Transition state stabilizer" evidence="1">
    <location>
        <position position="177"/>
    </location>
</feature>
<feature type="site" description="Transition state stabilizer" evidence="1">
    <location>
        <position position="236"/>
    </location>
</feature>
<accession>Q2NIR6</accession>